<keyword id="KW-1003">Cell membrane</keyword>
<keyword id="KW-1015">Disulfide bond</keyword>
<keyword id="KW-0325">Glycoprotein</keyword>
<keyword id="KW-0328">Glycosyltransferase</keyword>
<keyword id="KW-0336">GPI-anchor</keyword>
<keyword id="KW-0378">Hydrolase</keyword>
<keyword id="KW-0449">Lipoprotein</keyword>
<keyword id="KW-0472">Membrane</keyword>
<keyword id="KW-0520">NAD</keyword>
<keyword id="KW-0521">NADP</keyword>
<keyword id="KW-0548">Nucleotidyltransferase</keyword>
<keyword id="KW-1185">Reference proteome</keyword>
<keyword id="KW-0732">Signal</keyword>
<keyword id="KW-0808">Transferase</keyword>
<reference key="1">
    <citation type="journal article" date="1990" name="Nucleic Acids Res.">
        <title>Nucleotide and deduced amino acid sequence for the mouse homologue of the rat T-cell differentiation marker RT6.</title>
        <authorList>
            <person name="Koch F."/>
            <person name="Haag F."/>
            <person name="Thiele H.-G."/>
        </authorList>
    </citation>
    <scope>NUCLEOTIDE SEQUENCE [MRNA]</scope>
    <source>
        <strain>BALB/cJ</strain>
        <tissue>Spleen</tissue>
    </source>
</reference>
<reference key="2">
    <citation type="journal article" date="1995" name="Int. Immunol.">
        <title>Defects in the structure and expression of the genes for the T cell marker Rt6 in NZW and (NZB x NZW)F1 mice.</title>
        <authorList>
            <person name="Koch-Nolte F."/>
            <person name="Klein J."/>
            <person name="Hollmann C."/>
            <person name="Kuehl M."/>
            <person name="Haag F."/>
            <person name="Gaskins H.R."/>
            <person name="Leiter E."/>
            <person name="Thiele H.-G."/>
        </authorList>
    </citation>
    <scope>NUCLEOTIDE SEQUENCE [MRNA]</scope>
    <scope>TISSUE SPECIFICITY</scope>
    <scope>DEVELOPMENTAL STAGE</scope>
    <scope>VARIANTS 22-ALA--PRO-24 DELINS THR-GLY-SER; THR-26 AND SER-40</scope>
    <source>
        <strain>NZW/LacJ</strain>
        <tissue>Spleen</tissue>
    </source>
</reference>
<reference key="3">
    <citation type="journal article" date="1997" name="J. Immunol.">
        <title>Expression in BALB/c and C57BL/6 mice of Rt6-1 and Rt6-2 ADP-ribosyltransferases that differ in enzymatic activity: C57BL/6 Rt6-1 is a natural transferase knockout.</title>
        <authorList>
            <person name="Kanaitsuka T."/>
            <person name="Bortell R."/>
            <person name="Stevens L.A."/>
            <person name="Moss J."/>
            <person name="Sardinha D."/>
            <person name="Rajan T.V."/>
            <person name="Zipris D."/>
            <person name="Mordes J.P."/>
            <person name="Greiner D.L."/>
            <person name="Rossini A.A."/>
        </authorList>
    </citation>
    <scope>NUCLEOTIDE SEQUENCE [MRNA]</scope>
    <scope>FUNCTION</scope>
    <scope>TISSUE SPECIFICITY</scope>
    <scope>VARIANTS 22-ALA--PRO-24 DELINS THR-GLY-SER; THR-26; SER-40 AND 161-ARG--PRO-287 DEL</scope>
    <source>
        <strain>BALB/cJ</strain>
        <strain>C57BL/6J</strain>
        <tissue>Spleen</tissue>
    </source>
</reference>
<reference key="4">
    <citation type="journal article" date="2004" name="Genome Res.">
        <title>The status, quality, and expansion of the NIH full-length cDNA project: the Mammalian Gene Collection (MGC).</title>
        <authorList>
            <consortium name="The MGC Project Team"/>
        </authorList>
    </citation>
    <scope>NUCLEOTIDE SEQUENCE [LARGE SCALE MRNA]</scope>
</reference>
<reference key="5">
    <citation type="journal article" date="2000" name="J. Biochem.">
        <title>Mouse T-cell antigen rt6.1 has thiol-dependent NAD glycohydrolase activity.</title>
        <authorList>
            <person name="Hara N."/>
            <person name="Terashima M."/>
            <person name="Shimoyama M."/>
            <person name="Tsuchiya M."/>
        </authorList>
    </citation>
    <scope>FUNCTION</scope>
    <scope>CATALYTIC ACTIVITY</scope>
    <scope>BIOPHYSICOCHEMICAL PROPERTIES</scope>
    <scope>DISULFIDE BOND</scope>
    <scope>MUTAGENESIS OF CYS-80 AND CYS-201</scope>
</reference>
<sequence>MPSNNFKFFLTWWLTQQVTGLAVPFMLDMAPNAFDDQYEGCVEDMEKKAPQLLQEDFNMNEELKLEWEKAEIKWKEIKNCMSYPAGFHDFHGTALVAYTGNIHRSLNEATREFKINPGNFHYKAFHYYLTRALQLLSDQGCRSVYRGTNVRFRYTGKGSVRFGHFASSSLNRSVATSSPFFNGQGTLFIIKTCLGAHIKHCSYYTHEEEVLIPGYEVFHKVKTQSVERYIQISLDSPKRKKSNFNCFYSGSTQAANVSSLGSRESCVSLFLVVLLGLLVQQLTLAEP</sequence>
<proteinExistence type="evidence at protein level"/>
<evidence type="ECO:0000250" key="1"/>
<evidence type="ECO:0000255" key="2"/>
<evidence type="ECO:0000255" key="3">
    <source>
        <dbReference type="PROSITE-ProRule" id="PRU01340"/>
    </source>
</evidence>
<evidence type="ECO:0000269" key="4">
    <source>
    </source>
</evidence>
<evidence type="ECO:0000269" key="5">
    <source>
    </source>
</evidence>
<evidence type="ECO:0000269" key="6">
    <source>
    </source>
</evidence>
<evidence type="ECO:0000305" key="7"/>
<evidence type="ECO:0000305" key="8">
    <source>
    </source>
</evidence>
<gene>
    <name type="primary">Art2a</name>
    <name type="synonym">Art2a-ps</name>
    <name type="synonym">Rt6-1</name>
    <name type="synonym">Rt6.1</name>
</gene>
<protein>
    <recommendedName>
        <fullName>T-cell ecto-ADP-ribosyltransferase 1</fullName>
        <ecNumber evidence="4">2.4.2.31</ecNumber>
    </recommendedName>
    <alternativeName>
        <fullName>ADP-ribosyltransferase 2a pseudogene</fullName>
    </alternativeName>
    <alternativeName>
        <fullName>ADP-ribosyltransferase C2 and C3 toxin-like 2</fullName>
        <shortName>ARTC2</shortName>
    </alternativeName>
    <alternativeName>
        <fullName>Mono(ADP-ribosyl)transferase 2A</fullName>
    </alternativeName>
    <alternativeName>
        <fullName>NAD(+) glycohydrolase</fullName>
        <ecNumber evidence="4">3.2.2.5</ecNumber>
    </alternativeName>
    <alternativeName>
        <fullName>T-cell NAD(P)(+)--arginine ADP-ribosyltransferase 1</fullName>
    </alternativeName>
    <alternativeName>
        <fullName>T-cell differentiation marker Rt6 homolog 1</fullName>
    </alternativeName>
    <alternativeName>
        <fullName>T-cell mono(ADP-ribosyl)transferase 1</fullName>
    </alternativeName>
</protein>
<accession>P17981</accession>
<accession>O35278</accession>
<accession>Q0VB79</accession>
<accession>Q64173</accession>
<organism>
    <name type="scientific">Mus musculus</name>
    <name type="common">Mouse</name>
    <dbReference type="NCBI Taxonomy" id="10090"/>
    <lineage>
        <taxon>Eukaryota</taxon>
        <taxon>Metazoa</taxon>
        <taxon>Chordata</taxon>
        <taxon>Craniata</taxon>
        <taxon>Vertebrata</taxon>
        <taxon>Euteleostomi</taxon>
        <taxon>Mammalia</taxon>
        <taxon>Eutheria</taxon>
        <taxon>Euarchontoglires</taxon>
        <taxon>Glires</taxon>
        <taxon>Rodentia</taxon>
        <taxon>Myomorpha</taxon>
        <taxon>Muroidea</taxon>
        <taxon>Muridae</taxon>
        <taxon>Murinae</taxon>
        <taxon>Mus</taxon>
        <taxon>Mus</taxon>
    </lineage>
</organism>
<feature type="signal peptide">
    <location>
        <begin position="1"/>
        <end position="20"/>
    </location>
</feature>
<feature type="chain" id="PRO_0000019317" description="T-cell ecto-ADP-ribosyltransferase 1">
    <location>
        <begin position="21"/>
        <end position="258"/>
    </location>
</feature>
<feature type="propeptide" id="PRO_0000019318" description="Removed in mature form" evidence="1">
    <location>
        <begin position="259"/>
        <end position="287"/>
    </location>
</feature>
<feature type="domain" description="TR mART core" evidence="3">
    <location>
        <begin position="61"/>
        <end position="241"/>
    </location>
</feature>
<feature type="active site" evidence="3">
    <location>
        <position position="146"/>
    </location>
</feature>
<feature type="active site" evidence="3">
    <location>
        <position position="167"/>
    </location>
</feature>
<feature type="active site" evidence="3">
    <location>
        <position position="209"/>
    </location>
</feature>
<feature type="binding site" evidence="1">
    <location>
        <position position="98"/>
    </location>
    <ligand>
        <name>NAD(+)</name>
        <dbReference type="ChEBI" id="CHEBI:57540"/>
    </ligand>
</feature>
<feature type="binding site" evidence="1">
    <location>
        <position position="146"/>
    </location>
    <ligand>
        <name>NAD(+)</name>
        <dbReference type="ChEBI" id="CHEBI:57540"/>
    </ligand>
</feature>
<feature type="binding site" evidence="1">
    <location>
        <position position="202"/>
    </location>
    <ligand>
        <name>NAD(+)</name>
        <dbReference type="ChEBI" id="CHEBI:57540"/>
    </ligand>
</feature>
<feature type="site" description="Required for the thiol-dependency of NADase activity">
    <location>
        <position position="80"/>
    </location>
</feature>
<feature type="site" description="Required for the thiol-dependency of NADase activity">
    <location>
        <position position="201"/>
    </location>
</feature>
<feature type="lipid moiety-binding region" description="GPI-anchor amidated serine" evidence="1">
    <location>
        <position position="258"/>
    </location>
</feature>
<feature type="glycosylation site" description="N-linked (GlcNAc...) asparagine" evidence="2">
    <location>
        <position position="171"/>
    </location>
</feature>
<feature type="glycosylation site" description="N-linked (GlcNAc...) asparagine" evidence="2">
    <location>
        <position position="256"/>
    </location>
</feature>
<feature type="disulfide bond" evidence="1">
    <location>
        <begin position="41"/>
        <end position="246"/>
    </location>
</feature>
<feature type="disulfide bond" description="Alternate; present in the absence of reducing agents" evidence="8">
    <location>
        <begin position="80"/>
        <end position="201"/>
    </location>
</feature>
<feature type="disulfide bond" evidence="1">
    <location>
        <begin position="141"/>
        <end position="193"/>
    </location>
</feature>
<feature type="sequence variant" description="In strain: NZW and C57BL/6." evidence="5 6">
    <original>AVP</original>
    <variation>TGS</variation>
    <location>
        <begin position="22"/>
        <end position="24"/>
    </location>
</feature>
<feature type="sequence variant" description="In strain: NZW and C57BL/6." evidence="5 6">
    <original>M</original>
    <variation>T</variation>
    <location>
        <position position="26"/>
    </location>
</feature>
<feature type="sequence variant" description="In strain: NZW and C57BL/6." evidence="5 6">
    <original>G</original>
    <variation>S</variation>
    <location>
        <position position="40"/>
    </location>
</feature>
<feature type="sequence variant" description="In strain: C57BL/6." evidence="6">
    <location>
        <begin position="161"/>
        <end position="287"/>
    </location>
</feature>
<feature type="mutagenesis site" description="Loss of thiol-dependency of NADase activity." evidence="4">
    <original>C</original>
    <variation>S</variation>
    <location>
        <position position="80"/>
    </location>
</feature>
<feature type="mutagenesis site" description="Loss of thiol-dependency of NADase activity." evidence="4">
    <original>C</original>
    <variation>F</variation>
    <location>
        <position position="201"/>
    </location>
</feature>
<feature type="sequence conflict" description="In Ref. 4; AAI20754." evidence="7" ref="4">
    <original>PSN</original>
    <variation>TSK</variation>
    <location>
        <begin position="2"/>
        <end position="4"/>
    </location>
</feature>
<feature type="sequence conflict" description="In Ref. 2; AAB35402." evidence="7" ref="2">
    <original>N</original>
    <variation>K</variation>
    <location>
        <position position="5"/>
    </location>
</feature>
<feature type="sequence conflict" description="In Ref. 2; AAB35402." evidence="7" ref="2">
    <original>T</original>
    <variation>A</variation>
    <location>
        <position position="11"/>
    </location>
</feature>
<feature type="sequence conflict" description="In Ref. 1; CAA37181." evidence="7" ref="1">
    <original>S</original>
    <variation>P</variation>
    <location>
        <position position="268"/>
    </location>
</feature>
<feature type="sequence conflict" description="In Ref. 4; AAI20754." evidence="7" ref="4">
    <original>P</original>
    <variation>L</variation>
    <location>
        <position position="287"/>
    </location>
</feature>
<dbReference type="EC" id="2.4.2.31" evidence="4"/>
<dbReference type="EC" id="3.2.2.5" evidence="4"/>
<dbReference type="EMBL" id="X52991">
    <property type="protein sequence ID" value="CAA37181.1"/>
    <property type="molecule type" value="mRNA"/>
</dbReference>
<dbReference type="EMBL" id="S79913">
    <property type="protein sequence ID" value="AAB35402.1"/>
    <property type="molecule type" value="mRNA"/>
</dbReference>
<dbReference type="EMBL" id="AF016462">
    <property type="protein sequence ID" value="AAB71682.1"/>
    <property type="molecule type" value="mRNA"/>
</dbReference>
<dbReference type="EMBL" id="BC120753">
    <property type="protein sequence ID" value="AAI20754.1"/>
    <property type="molecule type" value="mRNA"/>
</dbReference>
<dbReference type="PIR" id="S12738">
    <property type="entry name" value="S12738"/>
</dbReference>
<dbReference type="RefSeq" id="NP_031516.1">
    <property type="nucleotide sequence ID" value="NM_007490.1"/>
</dbReference>
<dbReference type="SMR" id="P17981"/>
<dbReference type="FunCoup" id="P17981">
    <property type="interactions" value="48"/>
</dbReference>
<dbReference type="GlyCosmos" id="P17981">
    <property type="glycosylation" value="2 sites, No reported glycans"/>
</dbReference>
<dbReference type="GlyGen" id="P17981">
    <property type="glycosylation" value="2 sites"/>
</dbReference>
<dbReference type="iPTMnet" id="P17981"/>
<dbReference type="PhosphoSitePlus" id="P17981"/>
<dbReference type="DNASU" id="11871"/>
<dbReference type="GeneID" id="11871"/>
<dbReference type="KEGG" id="mmu:11871"/>
<dbReference type="AGR" id="MGI:107546"/>
<dbReference type="CTD" id="11871"/>
<dbReference type="MGI" id="MGI:107546">
    <property type="gene designation" value="Art2a"/>
</dbReference>
<dbReference type="InParanoid" id="P17981"/>
<dbReference type="SABIO-RK" id="P17981"/>
<dbReference type="BioGRID-ORCS" id="11871">
    <property type="hits" value="0 hits in 22 CRISPR screens"/>
</dbReference>
<dbReference type="ChiTaRS" id="Art2a">
    <property type="organism name" value="mouse"/>
</dbReference>
<dbReference type="PRO" id="PR:P17981"/>
<dbReference type="Proteomes" id="UP000000589">
    <property type="component" value="Unplaced"/>
</dbReference>
<dbReference type="RNAct" id="P17981">
    <property type="molecule type" value="protein"/>
</dbReference>
<dbReference type="GO" id="GO:0009897">
    <property type="term" value="C:external side of plasma membrane"/>
    <property type="evidence" value="ECO:0000314"/>
    <property type="project" value="UniProtKB"/>
</dbReference>
<dbReference type="GO" id="GO:0016798">
    <property type="term" value="F:hydrolase activity, acting on glycosyl bonds"/>
    <property type="evidence" value="ECO:0000314"/>
    <property type="project" value="UniProtKB"/>
</dbReference>
<dbReference type="GO" id="GO:0003953">
    <property type="term" value="F:NAD+ nucleosidase activity"/>
    <property type="evidence" value="ECO:0007669"/>
    <property type="project" value="UniProtKB-EC"/>
</dbReference>
<dbReference type="GO" id="GO:0106274">
    <property type="term" value="F:NAD+-protein-arginine ADP-ribosyltransferase activity"/>
    <property type="evidence" value="ECO:0000314"/>
    <property type="project" value="UniProtKB"/>
</dbReference>
<dbReference type="GO" id="GO:0016779">
    <property type="term" value="F:nucleotidyltransferase activity"/>
    <property type="evidence" value="ECO:0007669"/>
    <property type="project" value="UniProtKB-KW"/>
</dbReference>
<dbReference type="GO" id="GO:0019677">
    <property type="term" value="P:NAD catabolic process"/>
    <property type="evidence" value="ECO:0000314"/>
    <property type="project" value="UniProtKB"/>
</dbReference>
<dbReference type="FunFam" id="3.90.176.10:FF:000001">
    <property type="entry name" value="NAD(P)(+)--arginine ADP-ribosyltransferase"/>
    <property type="match status" value="1"/>
</dbReference>
<dbReference type="Gene3D" id="3.90.176.10">
    <property type="entry name" value="Toxin ADP-ribosyltransferase, Chain A, domain 1"/>
    <property type="match status" value="1"/>
</dbReference>
<dbReference type="InterPro" id="IPR050999">
    <property type="entry name" value="ADP-ribosyltransferase_ARG"/>
</dbReference>
<dbReference type="InterPro" id="IPR000768">
    <property type="entry name" value="ART"/>
</dbReference>
<dbReference type="PANTHER" id="PTHR10339">
    <property type="entry name" value="ADP-RIBOSYLTRANSFERASE"/>
    <property type="match status" value="1"/>
</dbReference>
<dbReference type="PANTHER" id="PTHR10339:SF24">
    <property type="entry name" value="T-CELL ECTO-ADP-RIBOSYLTRANSFERASE 1-RELATED"/>
    <property type="match status" value="1"/>
</dbReference>
<dbReference type="Pfam" id="PF01129">
    <property type="entry name" value="ART"/>
    <property type="match status" value="1"/>
</dbReference>
<dbReference type="PRINTS" id="PR00970">
    <property type="entry name" value="RIBTRNSFRASE"/>
</dbReference>
<dbReference type="SUPFAM" id="SSF56399">
    <property type="entry name" value="ADP-ribosylation"/>
    <property type="match status" value="1"/>
</dbReference>
<dbReference type="PROSITE" id="PS01291">
    <property type="entry name" value="ART"/>
    <property type="match status" value="1"/>
</dbReference>
<dbReference type="PROSITE" id="PS51996">
    <property type="entry name" value="TR_MART"/>
    <property type="match status" value="1"/>
</dbReference>
<comment type="function">
    <text evidence="4 6">Has both ADP-ribosyltransferase activity and thiol-dependent NAD(+) glycohydrolase activity.</text>
</comment>
<comment type="catalytic activity">
    <reaction evidence="4">
        <text>L-arginyl-[protein] + NAD(+) = N(omega)-(ADP-D-ribosyl)-L-arginyl-[protein] + nicotinamide + H(+)</text>
        <dbReference type="Rhea" id="RHEA:19149"/>
        <dbReference type="Rhea" id="RHEA-COMP:10532"/>
        <dbReference type="Rhea" id="RHEA-COMP:15087"/>
        <dbReference type="ChEBI" id="CHEBI:15378"/>
        <dbReference type="ChEBI" id="CHEBI:17154"/>
        <dbReference type="ChEBI" id="CHEBI:29965"/>
        <dbReference type="ChEBI" id="CHEBI:57540"/>
        <dbReference type="ChEBI" id="CHEBI:142554"/>
        <dbReference type="EC" id="2.4.2.31"/>
    </reaction>
</comment>
<comment type="catalytic activity">
    <reaction evidence="4">
        <text>NAD(+) + H2O = ADP-D-ribose + nicotinamide + H(+)</text>
        <dbReference type="Rhea" id="RHEA:16301"/>
        <dbReference type="ChEBI" id="CHEBI:15377"/>
        <dbReference type="ChEBI" id="CHEBI:15378"/>
        <dbReference type="ChEBI" id="CHEBI:17154"/>
        <dbReference type="ChEBI" id="CHEBI:57540"/>
        <dbReference type="ChEBI" id="CHEBI:57967"/>
        <dbReference type="EC" id="3.2.2.5"/>
    </reaction>
</comment>
<comment type="biophysicochemical properties">
    <kinetics>
        <KM evidence="4">0.12 mM for NAD for the NADase activity (in the presence of 0.03 mM DTT)</KM>
        <KM evidence="4">0.41 mM for NAD for the NADase activity (in the presence of 2 mM DTT)</KM>
        <KM evidence="4">0.5 mM for NAD for the ADP-ribosyltransferase activity (in the presence of 0.02 mM DTT)</KM>
        <KM evidence="4">0.41 mM for NAD for the ADP-ribosyltransferase activity (in the presence of 2 mM DTT)</KM>
        <KM evidence="4">1.2 mM for L-arginine for the ADP-ribosyltransferase activity (in the presence of 0.02 mM DTT)</KM>
        <KM evidence="4">0.59 mM for L-arginine for the ADP-ribosyltransferase activity (in the presence of 2 mM DTT)</KM>
        <Vmax evidence="4">1.3 nmol/h/ug enzyme toward NAD for the NADase activity (in the presence of 0.03 mM DTT)</Vmax>
        <Vmax evidence="4">9.7 nmol/h/ug enzyme toward NAD for the NADase activity (in the presence of 2 mM DTT)</Vmax>
        <Vmax evidence="4">12.3 nmol/h/ug enzyme toward NAD for the ADP-ribosyltransferase activity (in the presence of 0.02 mM DTT)</Vmax>
        <Vmax evidence="4">159.0 nmol/h/ug enzyme toward NAD for the ADP-ribosyltransferase activity (in the presence of 2 mM DTT)</Vmax>
        <Vmax evidence="4">6.8 nmol/h/ug enzyme toward L-arginine for the ADP-ribosyltransferase activity (in the presence of 0.02 mM DTT)</Vmax>
        <Vmax evidence="4">77.0 nmol/h/ug enzyme toward L-arginine for the ADP-ribosyltransferase activity (in the presence of 2 mM DTT)</Vmax>
    </kinetics>
</comment>
<comment type="subcellular location">
    <subcellularLocation>
        <location>Cell membrane</location>
        <topology>Lipid-anchor</topology>
        <topology>GPI-anchor</topology>
    </subcellularLocation>
</comment>
<comment type="tissue specificity">
    <text evidence="5 6">Expressed in spleen, intestine and thymus.</text>
</comment>
<comment type="developmental stage">
    <text evidence="5">In intestine, the expression levels are highest during neonatal stages and decrease towards adulthood. In spleen, the expression is lowest in neonatals and increases during further developmental stages.</text>
</comment>
<comment type="PTM">
    <text>It is proposed that in the absence of reducing agents, a disulfide bond is formed between Cys-80 and Cys-201, leading to a conformational change that reduces the catalytic rate of NAD glycohydrolysis.</text>
</comment>
<comment type="disease">
    <text>A subset of Rt6+ regulatory T-cells may confer protection to autoimmune disease, and failure to develop this subset may result in enhanced susceptibility for autoimmune disease.</text>
</comment>
<comment type="similarity">
    <text evidence="7">Belongs to the Arg-specific ADP-ribosyltransferase family.</text>
</comment>
<comment type="caution">
    <text evidence="7">Defined as a polymorphic pseudogene by MGI. In strain C57BL/6, a polymorphism creates a premature stop codon at position 161. PubMed:9300695 shows that the truncated protein is not functional.</text>
</comment>
<name>NAR2A_MOUSE</name>